<organism>
    <name type="scientific">Delftia acidovorans (strain DSM 14801 / SPH-1)</name>
    <dbReference type="NCBI Taxonomy" id="398578"/>
    <lineage>
        <taxon>Bacteria</taxon>
        <taxon>Pseudomonadati</taxon>
        <taxon>Pseudomonadota</taxon>
        <taxon>Betaproteobacteria</taxon>
        <taxon>Burkholderiales</taxon>
        <taxon>Comamonadaceae</taxon>
        <taxon>Delftia</taxon>
    </lineage>
</organism>
<protein>
    <recommendedName>
        <fullName evidence="1">Transcription antitermination protein NusB</fullName>
    </recommendedName>
    <alternativeName>
        <fullName evidence="1">Antitermination factor NusB</fullName>
    </alternativeName>
</protein>
<comment type="function">
    <text evidence="1">Involved in transcription antitermination. Required for transcription of ribosomal RNA (rRNA) genes. Binds specifically to the boxA antiterminator sequence of the ribosomal RNA (rrn) operons.</text>
</comment>
<comment type="similarity">
    <text evidence="1">Belongs to the NusB family.</text>
</comment>
<accession>A9BVN7</accession>
<dbReference type="EMBL" id="CP000884">
    <property type="protein sequence ID" value="ABX35104.1"/>
    <property type="molecule type" value="Genomic_DNA"/>
</dbReference>
<dbReference type="RefSeq" id="WP_012204385.1">
    <property type="nucleotide sequence ID" value="NC_010002.1"/>
</dbReference>
<dbReference type="SMR" id="A9BVN7"/>
<dbReference type="STRING" id="398578.Daci_2466"/>
<dbReference type="GeneID" id="24117450"/>
<dbReference type="KEGG" id="dac:Daci_2466"/>
<dbReference type="eggNOG" id="COG0781">
    <property type="taxonomic scope" value="Bacteria"/>
</dbReference>
<dbReference type="HOGENOM" id="CLU_087843_4_1_4"/>
<dbReference type="Proteomes" id="UP000000784">
    <property type="component" value="Chromosome"/>
</dbReference>
<dbReference type="GO" id="GO:0005829">
    <property type="term" value="C:cytosol"/>
    <property type="evidence" value="ECO:0007669"/>
    <property type="project" value="TreeGrafter"/>
</dbReference>
<dbReference type="GO" id="GO:0003723">
    <property type="term" value="F:RNA binding"/>
    <property type="evidence" value="ECO:0007669"/>
    <property type="project" value="UniProtKB-UniRule"/>
</dbReference>
<dbReference type="GO" id="GO:0006353">
    <property type="term" value="P:DNA-templated transcription termination"/>
    <property type="evidence" value="ECO:0007669"/>
    <property type="project" value="UniProtKB-UniRule"/>
</dbReference>
<dbReference type="GO" id="GO:0031564">
    <property type="term" value="P:transcription antitermination"/>
    <property type="evidence" value="ECO:0007669"/>
    <property type="project" value="UniProtKB-KW"/>
</dbReference>
<dbReference type="Gene3D" id="1.10.940.10">
    <property type="entry name" value="NusB-like"/>
    <property type="match status" value="1"/>
</dbReference>
<dbReference type="HAMAP" id="MF_00073">
    <property type="entry name" value="NusB"/>
    <property type="match status" value="1"/>
</dbReference>
<dbReference type="InterPro" id="IPR035926">
    <property type="entry name" value="NusB-like_sf"/>
</dbReference>
<dbReference type="InterPro" id="IPR011605">
    <property type="entry name" value="NusB_fam"/>
</dbReference>
<dbReference type="InterPro" id="IPR006027">
    <property type="entry name" value="NusB_RsmB_TIM44"/>
</dbReference>
<dbReference type="NCBIfam" id="TIGR01951">
    <property type="entry name" value="nusB"/>
    <property type="match status" value="1"/>
</dbReference>
<dbReference type="PANTHER" id="PTHR11078:SF3">
    <property type="entry name" value="ANTITERMINATION NUSB DOMAIN-CONTAINING PROTEIN"/>
    <property type="match status" value="1"/>
</dbReference>
<dbReference type="PANTHER" id="PTHR11078">
    <property type="entry name" value="N UTILIZATION SUBSTANCE PROTEIN B-RELATED"/>
    <property type="match status" value="1"/>
</dbReference>
<dbReference type="Pfam" id="PF01029">
    <property type="entry name" value="NusB"/>
    <property type="match status" value="1"/>
</dbReference>
<dbReference type="SUPFAM" id="SSF48013">
    <property type="entry name" value="NusB-like"/>
    <property type="match status" value="1"/>
</dbReference>
<keyword id="KW-1185">Reference proteome</keyword>
<keyword id="KW-0694">RNA-binding</keyword>
<keyword id="KW-0804">Transcription</keyword>
<keyword id="KW-0889">Transcription antitermination</keyword>
<keyword id="KW-0805">Transcription regulation</keyword>
<proteinExistence type="inferred from homology"/>
<name>NUSB_DELAS</name>
<reference key="1">
    <citation type="submission" date="2007-11" db="EMBL/GenBank/DDBJ databases">
        <title>Complete sequence of Delftia acidovorans DSM 14801 / SPH-1.</title>
        <authorList>
            <person name="Copeland A."/>
            <person name="Lucas S."/>
            <person name="Lapidus A."/>
            <person name="Barry K."/>
            <person name="Glavina del Rio T."/>
            <person name="Dalin E."/>
            <person name="Tice H."/>
            <person name="Pitluck S."/>
            <person name="Lowry S."/>
            <person name="Clum A."/>
            <person name="Schmutz J."/>
            <person name="Larimer F."/>
            <person name="Land M."/>
            <person name="Hauser L."/>
            <person name="Kyrpides N."/>
            <person name="Kim E."/>
            <person name="Schleheck D."/>
            <person name="Richardson P."/>
        </authorList>
    </citation>
    <scope>NUCLEOTIDE SEQUENCE [LARGE SCALE GENOMIC DNA]</scope>
    <source>
        <strain>DSM 14801 / SPH-1</strain>
    </source>
</reference>
<feature type="chain" id="PRO_1000092547" description="Transcription antitermination protein NusB">
    <location>
        <begin position="1"/>
        <end position="212"/>
    </location>
</feature>
<feature type="region of interest" description="Disordered" evidence="2">
    <location>
        <begin position="1"/>
        <end position="34"/>
    </location>
</feature>
<feature type="region of interest" description="Disordered" evidence="2">
    <location>
        <begin position="169"/>
        <end position="212"/>
    </location>
</feature>
<feature type="compositionally biased region" description="Low complexity" evidence="2">
    <location>
        <begin position="178"/>
        <end position="212"/>
    </location>
</feature>
<evidence type="ECO:0000255" key="1">
    <source>
        <dbReference type="HAMAP-Rule" id="MF_00073"/>
    </source>
</evidence>
<evidence type="ECO:0000256" key="2">
    <source>
        <dbReference type="SAM" id="MobiDB-lite"/>
    </source>
</evidence>
<sequence length="212" mass="22465">MSDEQSTPASGRPPRQSRGGLTSTGARKAASKSNRSRAREFALQALYQHLVGGNDVEAIDRFTRDLSGFHKADSVHYDALLRGCINSQVDLDALIAPKLDRTMAEISPIEHASMWIGVYEFQHCPDVPWRVVLNECIELAKEFGGTDGHKYVNAVLNGLAPTLRAAEVEHDRAGKGSAPAQPAAKADTATDAVADAATDAAAADDAADQAAG</sequence>
<gene>
    <name evidence="1" type="primary">nusB</name>
    <name type="ordered locus">Daci_2466</name>
</gene>